<comment type="function">
    <text evidence="1">Catalyzes the decarboxylation of four acetate groups of uroporphyrinogen-III to yield coproporphyrinogen-III.</text>
</comment>
<comment type="catalytic activity">
    <reaction evidence="1">
        <text>uroporphyrinogen III + 4 H(+) = coproporphyrinogen III + 4 CO2</text>
        <dbReference type="Rhea" id="RHEA:19865"/>
        <dbReference type="ChEBI" id="CHEBI:15378"/>
        <dbReference type="ChEBI" id="CHEBI:16526"/>
        <dbReference type="ChEBI" id="CHEBI:57308"/>
        <dbReference type="ChEBI" id="CHEBI:57309"/>
        <dbReference type="EC" id="4.1.1.37"/>
    </reaction>
</comment>
<comment type="pathway">
    <text evidence="1">Porphyrin-containing compound metabolism; protoporphyrin-IX biosynthesis; coproporphyrinogen-III from 5-aminolevulinate: step 4/4.</text>
</comment>
<comment type="subunit">
    <text evidence="1">Homodimer.</text>
</comment>
<comment type="subcellular location">
    <subcellularLocation>
        <location evidence="1">Cytoplasm</location>
    </subcellularLocation>
</comment>
<comment type="similarity">
    <text evidence="1">Belongs to the uroporphyrinogen decarboxylase family.</text>
</comment>
<organism>
    <name type="scientific">Psychromonas ingrahamii (strain DSM 17664 / CCUG 51855 / 37)</name>
    <dbReference type="NCBI Taxonomy" id="357804"/>
    <lineage>
        <taxon>Bacteria</taxon>
        <taxon>Pseudomonadati</taxon>
        <taxon>Pseudomonadota</taxon>
        <taxon>Gammaproteobacteria</taxon>
        <taxon>Alteromonadales</taxon>
        <taxon>Psychromonadaceae</taxon>
        <taxon>Psychromonas</taxon>
    </lineage>
</organism>
<dbReference type="EC" id="4.1.1.37" evidence="1"/>
<dbReference type="EMBL" id="CP000510">
    <property type="protein sequence ID" value="ABM04909.1"/>
    <property type="molecule type" value="Genomic_DNA"/>
</dbReference>
<dbReference type="RefSeq" id="WP_011771461.1">
    <property type="nucleotide sequence ID" value="NC_008709.1"/>
</dbReference>
<dbReference type="SMR" id="A1SZJ4"/>
<dbReference type="STRING" id="357804.Ping_3222"/>
<dbReference type="KEGG" id="pin:Ping_3222"/>
<dbReference type="eggNOG" id="COG0407">
    <property type="taxonomic scope" value="Bacteria"/>
</dbReference>
<dbReference type="HOGENOM" id="CLU_040933_0_0_6"/>
<dbReference type="OrthoDB" id="9806656at2"/>
<dbReference type="UniPathway" id="UPA00251">
    <property type="reaction ID" value="UER00321"/>
</dbReference>
<dbReference type="Proteomes" id="UP000000639">
    <property type="component" value="Chromosome"/>
</dbReference>
<dbReference type="GO" id="GO:0005829">
    <property type="term" value="C:cytosol"/>
    <property type="evidence" value="ECO:0007669"/>
    <property type="project" value="TreeGrafter"/>
</dbReference>
<dbReference type="GO" id="GO:0004853">
    <property type="term" value="F:uroporphyrinogen decarboxylase activity"/>
    <property type="evidence" value="ECO:0007669"/>
    <property type="project" value="UniProtKB-UniRule"/>
</dbReference>
<dbReference type="GO" id="GO:0019353">
    <property type="term" value="P:protoporphyrinogen IX biosynthetic process from glutamate"/>
    <property type="evidence" value="ECO:0007669"/>
    <property type="project" value="TreeGrafter"/>
</dbReference>
<dbReference type="CDD" id="cd00717">
    <property type="entry name" value="URO-D"/>
    <property type="match status" value="1"/>
</dbReference>
<dbReference type="FunFam" id="3.20.20.210:FF:000001">
    <property type="entry name" value="Uroporphyrinogen decarboxylase"/>
    <property type="match status" value="1"/>
</dbReference>
<dbReference type="Gene3D" id="3.20.20.210">
    <property type="match status" value="1"/>
</dbReference>
<dbReference type="HAMAP" id="MF_00218">
    <property type="entry name" value="URO_D"/>
    <property type="match status" value="1"/>
</dbReference>
<dbReference type="InterPro" id="IPR038071">
    <property type="entry name" value="UROD/MetE-like_sf"/>
</dbReference>
<dbReference type="InterPro" id="IPR006361">
    <property type="entry name" value="Uroporphyrinogen_deCO2ase_HemE"/>
</dbReference>
<dbReference type="InterPro" id="IPR000257">
    <property type="entry name" value="Uroporphyrinogen_deCOase"/>
</dbReference>
<dbReference type="NCBIfam" id="TIGR01464">
    <property type="entry name" value="hemE"/>
    <property type="match status" value="1"/>
</dbReference>
<dbReference type="PANTHER" id="PTHR21091">
    <property type="entry name" value="METHYLTETRAHYDROFOLATE:HOMOCYSTEINE METHYLTRANSFERASE RELATED"/>
    <property type="match status" value="1"/>
</dbReference>
<dbReference type="PANTHER" id="PTHR21091:SF169">
    <property type="entry name" value="UROPORPHYRINOGEN DECARBOXYLASE"/>
    <property type="match status" value="1"/>
</dbReference>
<dbReference type="Pfam" id="PF01208">
    <property type="entry name" value="URO-D"/>
    <property type="match status" value="1"/>
</dbReference>
<dbReference type="SUPFAM" id="SSF51726">
    <property type="entry name" value="UROD/MetE-like"/>
    <property type="match status" value="1"/>
</dbReference>
<dbReference type="PROSITE" id="PS00906">
    <property type="entry name" value="UROD_1"/>
    <property type="match status" value="1"/>
</dbReference>
<dbReference type="PROSITE" id="PS00907">
    <property type="entry name" value="UROD_2"/>
    <property type="match status" value="1"/>
</dbReference>
<name>DCUP_PSYIN</name>
<gene>
    <name evidence="1" type="primary">hemE</name>
    <name type="ordered locus">Ping_3222</name>
</gene>
<keyword id="KW-0963">Cytoplasm</keyword>
<keyword id="KW-0210">Decarboxylase</keyword>
<keyword id="KW-0456">Lyase</keyword>
<keyword id="KW-0627">Porphyrin biosynthesis</keyword>
<keyword id="KW-1185">Reference proteome</keyword>
<sequence>MTELKNDRYLRALLKQDVDKTPVWMMRQAGRYLPEYKKVRAQAGDFMSLCRNADLACEVTLQPLRRFDLDAAILFSDILTIPDAMGLGLYFAEGEGPKLKRPITCKKDVDNLIMPDPEGELQYVMNAVRTIRRELKGSVPLIGFAGSPWTLATYMVEGGSSKAFTKIKKMAFCEPQLLHTLLDKLADSVIDYLNAQIAAGAQSVMVFDTWGGVLSPRDYKDFSLQYMTKIVAGLQRSYEGQKIPVTLFTKNGGQWLEAIADTGCDAIGLDWTIDMASAKARVGDRVVLQGNMDPSMLYATPERIRQEVATILASFGKGNGHVFNLGHGIHLDVPPENGKVFVDAVHELSMPYHV</sequence>
<proteinExistence type="inferred from homology"/>
<accession>A1SZJ4</accession>
<protein>
    <recommendedName>
        <fullName evidence="1">Uroporphyrinogen decarboxylase</fullName>
        <shortName evidence="1">UPD</shortName>
        <shortName evidence="1">URO-D</shortName>
        <ecNumber evidence="1">4.1.1.37</ecNumber>
    </recommendedName>
</protein>
<feature type="chain" id="PRO_1000023954" description="Uroporphyrinogen decarboxylase">
    <location>
        <begin position="1"/>
        <end position="354"/>
    </location>
</feature>
<feature type="binding site" evidence="1">
    <location>
        <begin position="27"/>
        <end position="31"/>
    </location>
    <ligand>
        <name>substrate</name>
    </ligand>
</feature>
<feature type="binding site" evidence="1">
    <location>
        <position position="77"/>
    </location>
    <ligand>
        <name>substrate</name>
    </ligand>
</feature>
<feature type="binding site" evidence="1">
    <location>
        <position position="154"/>
    </location>
    <ligand>
        <name>substrate</name>
    </ligand>
</feature>
<feature type="binding site" evidence="1">
    <location>
        <position position="209"/>
    </location>
    <ligand>
        <name>substrate</name>
    </ligand>
</feature>
<feature type="binding site" evidence="1">
    <location>
        <position position="327"/>
    </location>
    <ligand>
        <name>substrate</name>
    </ligand>
</feature>
<feature type="site" description="Transition state stabilizer" evidence="1">
    <location>
        <position position="77"/>
    </location>
</feature>
<reference key="1">
    <citation type="journal article" date="2008" name="BMC Genomics">
        <title>Genomics of an extreme psychrophile, Psychromonas ingrahamii.</title>
        <authorList>
            <person name="Riley M."/>
            <person name="Staley J.T."/>
            <person name="Danchin A."/>
            <person name="Wang T.Z."/>
            <person name="Brettin T.S."/>
            <person name="Hauser L.J."/>
            <person name="Land M.L."/>
            <person name="Thompson L.S."/>
        </authorList>
    </citation>
    <scope>NUCLEOTIDE SEQUENCE [LARGE SCALE GENOMIC DNA]</scope>
    <source>
        <strain>DSM 17664 / CCUG 51855 / 37</strain>
    </source>
</reference>
<evidence type="ECO:0000255" key="1">
    <source>
        <dbReference type="HAMAP-Rule" id="MF_00218"/>
    </source>
</evidence>